<proteinExistence type="evidence at protein level"/>
<gene>
    <name type="primary">Myl6</name>
</gene>
<protein>
    <recommendedName>
        <fullName>Myosin light polypeptide 6</fullName>
    </recommendedName>
    <alternativeName>
        <fullName>17 kDa myosin light chain</fullName>
        <shortName>LC17</shortName>
    </alternativeName>
    <alternativeName>
        <fullName>Myosin light chain 3</fullName>
        <shortName>MLC-3</shortName>
    </alternativeName>
    <alternativeName>
        <fullName>Myosin light chain alkali 3</fullName>
        <shortName>Myosin light chain A3</shortName>
    </alternativeName>
    <alternativeName>
        <fullName>Smooth muscle and nonmuscle myosin light chain alkali 6</fullName>
    </alternativeName>
</protein>
<accession>Q64119</accession>
<organism>
    <name type="scientific">Rattus norvegicus</name>
    <name type="common">Rat</name>
    <dbReference type="NCBI Taxonomy" id="10116"/>
    <lineage>
        <taxon>Eukaryota</taxon>
        <taxon>Metazoa</taxon>
        <taxon>Chordata</taxon>
        <taxon>Craniata</taxon>
        <taxon>Vertebrata</taxon>
        <taxon>Euteleostomi</taxon>
        <taxon>Mammalia</taxon>
        <taxon>Eutheria</taxon>
        <taxon>Euarchontoglires</taxon>
        <taxon>Glires</taxon>
        <taxon>Rodentia</taxon>
        <taxon>Myomorpha</taxon>
        <taxon>Muroidea</taxon>
        <taxon>Muridae</taxon>
        <taxon>Murinae</taxon>
        <taxon>Rattus</taxon>
    </lineage>
</organism>
<name>MYL6_RAT</name>
<reference key="1">
    <citation type="journal article" date="1995" name="Biochem. Biophys. Res. Commun.">
        <title>Genes up-regulated in hypertrophied ventricle.</title>
        <authorList>
            <person name="Iwai N."/>
            <person name="Shimoike H."/>
            <person name="Kinoshita M."/>
        </authorList>
    </citation>
    <scope>NUCLEOTIDE SEQUENCE [MRNA]</scope>
    <source>
        <strain>Sprague-Dawley</strain>
        <tissue>Heart</tissue>
    </source>
</reference>
<reference key="2">
    <citation type="submission" date="2007-04" db="UniProtKB">
        <authorList>
            <person name="Lubec G."/>
            <person name="Chen W.-Q."/>
        </authorList>
    </citation>
    <scope>PROTEIN SEQUENCE OF 14-21; 80-94 AND 99-110</scope>
    <scope>IDENTIFICATION BY MASS SPECTROMETRY</scope>
    <source>
        <strain>Sprague-Dawley</strain>
        <tissue>Hippocampus</tissue>
    </source>
</reference>
<feature type="initiator methionine" description="Removed" evidence="1">
    <location>
        <position position="1"/>
    </location>
</feature>
<feature type="chain" id="PRO_0000198693" description="Myosin light polypeptide 6">
    <location>
        <begin position="2"/>
        <end position="151"/>
    </location>
</feature>
<feature type="domain" description="EF-hand 1" evidence="3">
    <location>
        <begin position="7"/>
        <end position="42"/>
    </location>
</feature>
<feature type="domain" description="EF-hand 2" evidence="3">
    <location>
        <begin position="84"/>
        <end position="119"/>
    </location>
</feature>
<feature type="domain" description="EF-hand 3" evidence="3">
    <location>
        <begin position="119"/>
        <end position="151"/>
    </location>
</feature>
<feature type="modified residue" description="N-acetylcysteine" evidence="1">
    <location>
        <position position="2"/>
    </location>
</feature>
<feature type="modified residue" description="Phosphoserine" evidence="1">
    <location>
        <position position="57"/>
    </location>
</feature>
<feature type="modified residue" description="N6-acetyllysine" evidence="1">
    <location>
        <position position="81"/>
    </location>
</feature>
<dbReference type="EMBL" id="S77858">
    <property type="protein sequence ID" value="AAB34126.1"/>
    <property type="molecule type" value="mRNA"/>
</dbReference>
<dbReference type="RefSeq" id="NP_001094453.1">
    <property type="nucleotide sequence ID" value="NM_001100983.1"/>
</dbReference>
<dbReference type="SMR" id="Q64119"/>
<dbReference type="BioGRID" id="263744">
    <property type="interactions" value="4"/>
</dbReference>
<dbReference type="FunCoup" id="Q64119">
    <property type="interactions" value="1608"/>
</dbReference>
<dbReference type="IntAct" id="Q64119">
    <property type="interactions" value="1"/>
</dbReference>
<dbReference type="MINT" id="Q64119"/>
<dbReference type="STRING" id="10116.ENSRNOP00000070200"/>
<dbReference type="iPTMnet" id="Q64119"/>
<dbReference type="PhosphoSitePlus" id="Q64119"/>
<dbReference type="jPOST" id="Q64119"/>
<dbReference type="PaxDb" id="10116-ENSRNOP00000065932"/>
<dbReference type="AGR" id="RGD:1559821"/>
<dbReference type="AGR" id="RGD:1589019"/>
<dbReference type="AGR" id="RGD:7517597"/>
<dbReference type="RGD" id="1589019">
    <property type="gene designation" value="Myl6"/>
</dbReference>
<dbReference type="eggNOG" id="KOG0030">
    <property type="taxonomic scope" value="Eukaryota"/>
</dbReference>
<dbReference type="InParanoid" id="Q64119"/>
<dbReference type="PRO" id="PR:Q64119"/>
<dbReference type="Proteomes" id="UP000002494">
    <property type="component" value="Unplaced"/>
</dbReference>
<dbReference type="GO" id="GO:0005903">
    <property type="term" value="C:brush border"/>
    <property type="evidence" value="ECO:0000266"/>
    <property type="project" value="RGD"/>
</dbReference>
<dbReference type="GO" id="GO:0016459">
    <property type="term" value="C:myosin complex"/>
    <property type="evidence" value="ECO:0000304"/>
    <property type="project" value="HGNC-UCL"/>
</dbReference>
<dbReference type="GO" id="GO:0016461">
    <property type="term" value="C:unconventional myosin complex"/>
    <property type="evidence" value="ECO:0000266"/>
    <property type="project" value="RGD"/>
</dbReference>
<dbReference type="GO" id="GO:0005509">
    <property type="term" value="F:calcium ion binding"/>
    <property type="evidence" value="ECO:0007669"/>
    <property type="project" value="InterPro"/>
</dbReference>
<dbReference type="GO" id="GO:0003774">
    <property type="term" value="F:cytoskeletal motor activity"/>
    <property type="evidence" value="ECO:0000304"/>
    <property type="project" value="HGNC-UCL"/>
</dbReference>
<dbReference type="GO" id="GO:0000146">
    <property type="term" value="F:microfilament motor activity"/>
    <property type="evidence" value="ECO:0000250"/>
    <property type="project" value="HGNC-UCL"/>
</dbReference>
<dbReference type="GO" id="GO:0008307">
    <property type="term" value="F:structural constituent of muscle"/>
    <property type="evidence" value="ECO:0000250"/>
    <property type="project" value="HGNC-UCL"/>
</dbReference>
<dbReference type="GO" id="GO:0006936">
    <property type="term" value="P:muscle contraction"/>
    <property type="evidence" value="ECO:0000304"/>
    <property type="project" value="HGNC-UCL"/>
</dbReference>
<dbReference type="GO" id="GO:0030049">
    <property type="term" value="P:muscle filament sliding"/>
    <property type="evidence" value="ECO:0000304"/>
    <property type="project" value="HGNC-UCL"/>
</dbReference>
<dbReference type="GO" id="GO:0007519">
    <property type="term" value="P:skeletal muscle tissue development"/>
    <property type="evidence" value="ECO:0000304"/>
    <property type="project" value="HGNC-UCL"/>
</dbReference>
<dbReference type="CDD" id="cd00051">
    <property type="entry name" value="EFh"/>
    <property type="match status" value="1"/>
</dbReference>
<dbReference type="FunFam" id="1.10.238.10:FF:000019">
    <property type="entry name" value="Myosin light chain 1 skeletal"/>
    <property type="match status" value="1"/>
</dbReference>
<dbReference type="FunFam" id="1.10.238.10:FF:000056">
    <property type="entry name" value="Myosin light chain 1 skeletal"/>
    <property type="match status" value="1"/>
</dbReference>
<dbReference type="Gene3D" id="1.10.238.10">
    <property type="entry name" value="EF-hand"/>
    <property type="match status" value="2"/>
</dbReference>
<dbReference type="InterPro" id="IPR050230">
    <property type="entry name" value="CALM/Myosin/TropC-like"/>
</dbReference>
<dbReference type="InterPro" id="IPR011992">
    <property type="entry name" value="EF-hand-dom_pair"/>
</dbReference>
<dbReference type="InterPro" id="IPR002048">
    <property type="entry name" value="EF_hand_dom"/>
</dbReference>
<dbReference type="PANTHER" id="PTHR23048">
    <property type="entry name" value="MYOSIN LIGHT CHAIN 1, 3"/>
    <property type="match status" value="1"/>
</dbReference>
<dbReference type="PANTHER" id="PTHR23048:SF7">
    <property type="entry name" value="SIMILAR TO MYOSIN, LIGHT POLYPEPTIDE 6, ALKALI, SMOOTH MUSCLE AND NON-MUSCLE"/>
    <property type="match status" value="1"/>
</dbReference>
<dbReference type="SMART" id="SM00054">
    <property type="entry name" value="EFh"/>
    <property type="match status" value="3"/>
</dbReference>
<dbReference type="SUPFAM" id="SSF47473">
    <property type="entry name" value="EF-hand"/>
    <property type="match status" value="1"/>
</dbReference>
<dbReference type="PROSITE" id="PS50222">
    <property type="entry name" value="EF_HAND_2"/>
    <property type="match status" value="3"/>
</dbReference>
<keyword id="KW-0007">Acetylation</keyword>
<keyword id="KW-0025">Alternative splicing</keyword>
<keyword id="KW-0903">Direct protein sequencing</keyword>
<keyword id="KW-0505">Motor protein</keyword>
<keyword id="KW-0514">Muscle protein</keyword>
<keyword id="KW-0518">Myosin</keyword>
<keyword id="KW-0597">Phosphoprotein</keyword>
<keyword id="KW-1185">Reference proteome</keyword>
<keyword id="KW-0677">Repeat</keyword>
<sequence length="151" mass="16975">MCDFTEDQTAEFKEAFQLFDRTGDGKILYSQCGDVMRALGQNPTNAEVLKVLGNPKSDEMNVKVLDFEHFLPMLQTVAKNKDQGTYEDYVEGLRVFDKEGNGTVMGAEIRHVLVTLGEKMTEEEVEMLVAGHEDSNGCINYEELLRMVLNG</sequence>
<evidence type="ECO:0000250" key="1">
    <source>
        <dbReference type="UniProtKB" id="P60660"/>
    </source>
</evidence>
<evidence type="ECO:0000250" key="2">
    <source>
        <dbReference type="UniProtKB" id="Q60605"/>
    </source>
</evidence>
<evidence type="ECO:0000255" key="3">
    <source>
        <dbReference type="PROSITE-ProRule" id="PRU00448"/>
    </source>
</evidence>
<comment type="function">
    <text>Regulatory light chain of myosin. Does not bind calcium.</text>
</comment>
<comment type="subunit">
    <text evidence="2">Myosin is a hexamer of 2 heavy chains and 4 light chains. Interacts with SPATA6.</text>
</comment>
<comment type="alternative products">
    <event type="alternative splicing"/>
    <isoform>
        <id>Q64119-2</id>
        <name>Smooth muscle</name>
        <name>MLC3sm</name>
        <name>LC17B</name>
        <name>LC17-sm</name>
        <sequence type="displayed"/>
    </isoform>
    <isoform>
        <id>Q64119-1</id>
        <name>Non-muscle</name>
        <name>MLC3nm</name>
        <name>LC17A</name>
        <name>LC17-nm</name>
        <sequence type="not described"/>
    </isoform>
</comment>